<protein>
    <recommendedName>
        <fullName>Conotoxin Bt11.1</fullName>
    </recommendedName>
</protein>
<comment type="subcellular location">
    <subcellularLocation>
        <location evidence="1">Secreted</location>
    </subcellularLocation>
</comment>
<comment type="tissue specificity">
    <text>Expressed by the venom duct.</text>
</comment>
<comment type="domain">
    <text>The cysteine framework is XI (C-C-CC-CC-C-C).</text>
</comment>
<comment type="similarity">
    <text evidence="4">Belongs to the conotoxin I1 superfamily.</text>
</comment>
<evidence type="ECO:0000250" key="1"/>
<evidence type="ECO:0000250" key="2">
    <source>
        <dbReference type="UniProtKB" id="Q7Z094"/>
    </source>
</evidence>
<evidence type="ECO:0000255" key="3"/>
<evidence type="ECO:0000305" key="4"/>
<reference key="1">
    <citation type="journal article" date="2005" name="FEBS J.">
        <title>Characterization of D-amino-acid-containing excitatory conotoxins and redefinition of the I-conotoxin superfamily.</title>
        <authorList>
            <person name="Buczek O."/>
            <person name="Yoshikami D."/>
            <person name="Watkins M."/>
            <person name="Bulaj G."/>
            <person name="Jimenez E.C."/>
            <person name="Olivera B.M."/>
        </authorList>
    </citation>
    <scope>NUCLEOTIDE SEQUENCE [MRNA]</scope>
    <source>
        <tissue>Venom duct</tissue>
    </source>
</reference>
<reference key="2">
    <citation type="journal article" date="2005" name="FEBS J.">
        <authorList>
            <person name="Buczek O."/>
            <person name="Yoshikami D."/>
            <person name="Watkins M."/>
            <person name="Bulaj G."/>
            <person name="Jimenez E.C."/>
            <person name="Olivera B.M."/>
        </authorList>
    </citation>
    <scope>ERRATUM OF PUBMED:16098199</scope>
</reference>
<reference key="3">
    <citation type="journal article" date="2010" name="Mol. Phylogenet. Evol.">
        <title>Evolution of Conus peptide toxins: analysis of Conus californicus Reeve, 1844.</title>
        <authorList>
            <person name="Biggs J.S."/>
            <person name="Watkins M."/>
            <person name="Puillandre N."/>
            <person name="Ownby J.P."/>
            <person name="Lopez-Vera E."/>
            <person name="Christensen S."/>
            <person name="Moreno K.J."/>
            <person name="Bernaldez J."/>
            <person name="Licea-Navarro A."/>
            <person name="Corneli P.S."/>
            <person name="Olivera B.M."/>
        </authorList>
    </citation>
    <scope>NUCLEOTIDE SEQUENCE [GENOMIC DNA]</scope>
</reference>
<keyword id="KW-0165">Cleavage on pair of basic residues</keyword>
<keyword id="KW-1015">Disulfide bond</keyword>
<keyword id="KW-0872">Ion channel impairing toxin</keyword>
<keyword id="KW-0528">Neurotoxin</keyword>
<keyword id="KW-0964">Secreted</keyword>
<keyword id="KW-0732">Signal</keyword>
<keyword id="KW-0800">Toxin</keyword>
<accession>P0C251</accession>
<accession>D6C4G6</accession>
<dbReference type="EMBL" id="FJ959108">
    <property type="protein sequence ID" value="ADB93078.1"/>
    <property type="molecule type" value="Genomic_DNA"/>
</dbReference>
<dbReference type="SMR" id="P0C251"/>
<dbReference type="ConoServer" id="1454">
    <property type="toxin name" value="Bt11.1 precursor"/>
</dbReference>
<dbReference type="GO" id="GO:0005576">
    <property type="term" value="C:extracellular region"/>
    <property type="evidence" value="ECO:0007669"/>
    <property type="project" value="UniProtKB-SubCell"/>
</dbReference>
<dbReference type="GO" id="GO:0099106">
    <property type="term" value="F:ion channel regulator activity"/>
    <property type="evidence" value="ECO:0007669"/>
    <property type="project" value="UniProtKB-KW"/>
</dbReference>
<dbReference type="GO" id="GO:0090729">
    <property type="term" value="F:toxin activity"/>
    <property type="evidence" value="ECO:0007669"/>
    <property type="project" value="UniProtKB-KW"/>
</dbReference>
<dbReference type="InterPro" id="IPR013141">
    <property type="entry name" value="Conotoxin-I_CS"/>
</dbReference>
<dbReference type="PROSITE" id="PS60019">
    <property type="entry name" value="I_CONOTOXIN"/>
    <property type="match status" value="1"/>
</dbReference>
<feature type="signal peptide" evidence="3">
    <location>
        <begin position="1"/>
        <end position="20"/>
    </location>
</feature>
<feature type="propeptide" id="PRO_0000262673" evidence="3">
    <location>
        <begin position="21"/>
        <end position="35"/>
    </location>
</feature>
<feature type="chain" id="PRO_0000262674" description="Conotoxin Bt11.1">
    <location>
        <begin position="38"/>
        <end position="73"/>
    </location>
</feature>
<feature type="disulfide bond" evidence="2">
    <location>
        <begin position="39"/>
        <end position="53"/>
    </location>
</feature>
<feature type="disulfide bond" evidence="2">
    <location>
        <begin position="46"/>
        <end position="58"/>
    </location>
</feature>
<feature type="disulfide bond" evidence="2">
    <location>
        <begin position="52"/>
        <end position="63"/>
    </location>
</feature>
<feature type="disulfide bond" evidence="2">
    <location>
        <begin position="57"/>
        <end position="70"/>
    </location>
</feature>
<proteinExistence type="evidence at transcript level"/>
<name>I1B1_CONBE</name>
<organism>
    <name type="scientific">Conus betulinus</name>
    <name type="common">Beech cone</name>
    <dbReference type="NCBI Taxonomy" id="89764"/>
    <lineage>
        <taxon>Eukaryota</taxon>
        <taxon>Metazoa</taxon>
        <taxon>Spiralia</taxon>
        <taxon>Lophotrochozoa</taxon>
        <taxon>Mollusca</taxon>
        <taxon>Gastropoda</taxon>
        <taxon>Caenogastropoda</taxon>
        <taxon>Neogastropoda</taxon>
        <taxon>Conoidea</taxon>
        <taxon>Conidae</taxon>
        <taxon>Conus</taxon>
        <taxon>Dendroconus</taxon>
    </lineage>
</organism>
<sequence>MKLCVAFLLVLVILPSVIGGKPSERTLSGATRRGDRRMCLSLGQRCERHSNCCGYLCCFYDKCVVTAIGCGHY</sequence>